<feature type="chain" id="PRO_0000093402" description="ATP-binding cassette sub-family C member 9">
    <location>
        <begin position="1"/>
        <end position="1549"/>
    </location>
</feature>
<feature type="topological domain" description="Extracellular" evidence="2">
    <location>
        <begin position="1"/>
        <end position="30"/>
    </location>
</feature>
<feature type="transmembrane region" description="Helical; Name=1" evidence="4">
    <location>
        <begin position="31"/>
        <end position="51"/>
    </location>
</feature>
<feature type="topological domain" description="Cytoplasmic" evidence="2">
    <location>
        <begin position="52"/>
        <end position="72"/>
    </location>
</feature>
<feature type="transmembrane region" description="Helical; Name=2" evidence="4">
    <location>
        <begin position="73"/>
        <end position="93"/>
    </location>
</feature>
<feature type="topological domain" description="Extracellular" evidence="2">
    <location>
        <begin position="94"/>
        <end position="101"/>
    </location>
</feature>
<feature type="transmembrane region" description="Helical; Name=3" evidence="4">
    <location>
        <begin position="102"/>
        <end position="122"/>
    </location>
</feature>
<feature type="topological domain" description="Cytoplasmic" evidence="2">
    <location>
        <begin position="123"/>
        <end position="132"/>
    </location>
</feature>
<feature type="transmembrane region" description="Helical; Name=4" evidence="4">
    <location>
        <begin position="133"/>
        <end position="153"/>
    </location>
</feature>
<feature type="topological domain" description="Extracellular" evidence="2">
    <location>
        <begin position="154"/>
        <end position="167"/>
    </location>
</feature>
<feature type="transmembrane region" description="Helical; Name=5" evidence="4">
    <location>
        <begin position="168"/>
        <end position="188"/>
    </location>
</feature>
<feature type="topological domain" description="Cytoplasmic" evidence="2">
    <location>
        <begin position="189"/>
        <end position="301"/>
    </location>
</feature>
<feature type="transmembrane region" description="Helical; Name=6" evidence="4">
    <location>
        <begin position="302"/>
        <end position="322"/>
    </location>
</feature>
<feature type="topological domain" description="Extracellular" evidence="2">
    <location>
        <begin position="323"/>
        <end position="350"/>
    </location>
</feature>
<feature type="transmembrane region" description="Helical; Name=7" evidence="4">
    <location>
        <begin position="351"/>
        <end position="371"/>
    </location>
</feature>
<feature type="topological domain" description="Cytoplasmic" evidence="2">
    <location>
        <begin position="372"/>
        <end position="423"/>
    </location>
</feature>
<feature type="transmembrane region" description="Helical; Name=8" evidence="4">
    <location>
        <begin position="424"/>
        <end position="444"/>
    </location>
</feature>
<feature type="topological domain" description="Extracellular" evidence="2">
    <location>
        <begin position="445"/>
        <end position="455"/>
    </location>
</feature>
<feature type="transmembrane region" description="Helical; Name=9" evidence="4">
    <location>
        <begin position="456"/>
        <end position="476"/>
    </location>
</feature>
<feature type="topological domain" description="Cytoplasmic" evidence="2">
    <location>
        <begin position="477"/>
        <end position="531"/>
    </location>
</feature>
<feature type="transmembrane region" description="Helical; Name=10" evidence="4">
    <location>
        <begin position="532"/>
        <end position="552"/>
    </location>
</feature>
<feature type="topological domain" description="Extracellular" evidence="2">
    <location>
        <begin position="553"/>
        <end position="571"/>
    </location>
</feature>
<feature type="transmembrane region" description="Helical; Name=11" evidence="4">
    <location>
        <begin position="572"/>
        <end position="592"/>
    </location>
</feature>
<feature type="topological domain" description="Cytoplasmic" evidence="2">
    <location>
        <begin position="593"/>
        <end position="990"/>
    </location>
</feature>
<feature type="transmembrane region" description="Helical; Name=12" evidence="4">
    <location>
        <begin position="991"/>
        <end position="1011"/>
    </location>
</feature>
<feature type="topological domain" description="Extracellular" evidence="2">
    <location>
        <begin position="1012"/>
        <end position="1034"/>
    </location>
</feature>
<feature type="transmembrane region" description="Helical; Name=13" evidence="4">
    <location>
        <begin position="1035"/>
        <end position="1055"/>
    </location>
</feature>
<feature type="topological domain" description="Cytoplasmic" evidence="2">
    <location>
        <begin position="1056"/>
        <end position="1127"/>
    </location>
</feature>
<feature type="transmembrane region" description="Helical; Name=14" evidence="4">
    <location>
        <begin position="1128"/>
        <end position="1148"/>
    </location>
</feature>
<feature type="topological domain" description="Extracellular" evidence="2">
    <location>
        <begin position="1149"/>
        <end position="1245"/>
    </location>
</feature>
<feature type="transmembrane region" description="Helical; Name=15" evidence="4">
    <location>
        <begin position="1246"/>
        <end position="1266"/>
    </location>
</feature>
<feature type="topological domain" description="Cytoplasmic" evidence="2">
    <location>
        <begin position="1267"/>
        <end position="1549"/>
    </location>
</feature>
<feature type="domain" description="ABC transmembrane type-1 1" evidence="4">
    <location>
        <begin position="297"/>
        <end position="597"/>
    </location>
</feature>
<feature type="domain" description="ABC transporter 1" evidence="3">
    <location>
        <begin position="672"/>
        <end position="912"/>
    </location>
</feature>
<feature type="domain" description="ABC transmembrane type-1 2" evidence="4">
    <location>
        <begin position="994"/>
        <end position="1274"/>
    </location>
</feature>
<feature type="domain" description="ABC transporter 2" evidence="3">
    <location>
        <begin position="1312"/>
        <end position="1546"/>
    </location>
</feature>
<feature type="region of interest" description="Disordered" evidence="5">
    <location>
        <begin position="944"/>
        <end position="967"/>
    </location>
</feature>
<feature type="compositionally biased region" description="Acidic residues" evidence="5">
    <location>
        <begin position="951"/>
        <end position="966"/>
    </location>
</feature>
<feature type="binding site" evidence="3">
    <location>
        <begin position="705"/>
        <end position="712"/>
    </location>
    <ligand>
        <name>ATP</name>
        <dbReference type="ChEBI" id="CHEBI:30616"/>
        <label>1</label>
    </ligand>
</feature>
<feature type="binding site" evidence="3">
    <location>
        <begin position="1346"/>
        <end position="1353"/>
    </location>
    <ligand>
        <name>ATP</name>
        <dbReference type="ChEBI" id="CHEBI:30616"/>
        <label>2</label>
    </ligand>
</feature>
<feature type="glycosylation site" description="N-linked (GlcNAc...) asparagine" evidence="2">
    <location>
        <position position="9"/>
    </location>
</feature>
<feature type="glycosylation site" description="N-linked (GlcNAc...) asparagine" evidence="2">
    <location>
        <position position="326"/>
    </location>
</feature>
<feature type="glycosylation site" description="N-linked (GlcNAc...) asparagine" evidence="2">
    <location>
        <position position="330"/>
    </location>
</feature>
<feature type="glycosylation site" description="N-linked (GlcNAc...) asparagine" evidence="2">
    <location>
        <position position="333"/>
    </location>
</feature>
<feature type="glycosylation site" description="N-linked (GlcNAc...) asparagine" evidence="2">
    <location>
        <position position="334"/>
    </location>
</feature>
<feature type="splice variant" id="VSP_000058" description="In isoform SUR2B." evidence="15">
    <original>SSIMDAGLVLVFSEGILVECDTVPNLLAHKNGLFSTLVMTNK</original>
    <variation>HTILTADLVIVMKRGNILEYDTPESLLAQENGVFASFVRADM</variation>
    <location>
        <begin position="1508"/>
        <end position="1549"/>
    </location>
</feature>
<feature type="sequence variant" id="VAR_068485" description="In HTOCD; dbSNP:rs387907230." evidence="9">
    <original>H</original>
    <variation>Y</variation>
    <location>
        <position position="60"/>
    </location>
</feature>
<feature type="sequence variant" id="VAR_068486" description="In HTOCD; dbSNP:rs2137921501." evidence="9">
    <original>D</original>
    <variation>E</variation>
    <location>
        <position position="207"/>
    </location>
</feature>
<feature type="sequence variant" id="VAR_068487" description="In HTOCD; dbSNP:rs1165205076." evidence="9">
    <original>G</original>
    <variation>C</variation>
    <location>
        <position position="380"/>
    </location>
</feature>
<feature type="sequence variant" id="VAR_068488" description="In HTOCD; mutant channels show reduced ATP sensitivity; rat ABCC9 construct containing this mutation shows gain of function." evidence="9 10">
    <original>P</original>
    <variation>L</variation>
    <location>
        <position position="432"/>
    </location>
</feature>
<feature type="sequence variant" id="VAR_068489" description="In HTOCD; rat ABCC9 construct containing this mutation shows gain of function; dbSNP:rs387907211." evidence="8 10">
    <original>A</original>
    <variation>V</variation>
    <location>
        <position position="478"/>
    </location>
</feature>
<feature type="sequence variant" id="VAR_068490" description="In HTOCD; dbSNP:rs387907229." evidence="9">
    <original>S</original>
    <variation>P</variation>
    <location>
        <position position="1020"/>
    </location>
</feature>
<feature type="sequence variant" id="VAR_068491" description="In HTOCD." evidence="9">
    <original>F</original>
    <variation>S</variation>
    <location>
        <position position="1039"/>
    </location>
</feature>
<feature type="sequence variant" id="VAR_068492" description="In HTOCD; rat ABCC9 construct containing this mutation shows gain of function; dbSNP:rs387907210." evidence="8 10">
    <original>C</original>
    <variation>Y</variation>
    <location>
        <position position="1043"/>
    </location>
</feature>
<feature type="sequence variant" id="VAR_068493" description="In HTOCD." evidence="9">
    <original>S</original>
    <variation>Y</variation>
    <location>
        <position position="1054"/>
    </location>
</feature>
<feature type="sequence variant" id="VAR_048143" description="In dbSNP:rs35404804.">
    <original>P</original>
    <variation>S</variation>
    <location>
        <position position="1108"/>
    </location>
</feature>
<feature type="sequence variant" id="VAR_068494" description="In HTOCD; dbSNP:rs387907228." evidence="9">
    <original>R</original>
    <variation>C</variation>
    <location>
        <position position="1116"/>
    </location>
</feature>
<feature type="sequence variant" id="VAR_068495" description="In HTOCD; mutant channels show reduced ATP sensitivity; dbSNP:rs387907227." evidence="9">
    <original>R</original>
    <variation>H</variation>
    <location>
        <position position="1116"/>
    </location>
</feature>
<feature type="sequence variant" id="VAR_068496" description="In HTOCD; mutant channels show reduced ATP sensitivity; dbSNP:rs387907209." evidence="8 9">
    <original>R</original>
    <variation>Q</variation>
    <location>
        <position position="1154"/>
    </location>
</feature>
<feature type="sequence variant" id="VAR_068497" description="In HTOCD; dbSNP:rs387907208." evidence="8 9">
    <original>R</original>
    <variation>W</variation>
    <location>
        <position position="1154"/>
    </location>
</feature>
<feature type="sequence variant" id="VAR_083082" description="In dbSNP:rs780799175." evidence="11">
    <original>L</original>
    <variation>R</variation>
    <location>
        <position position="1160"/>
    </location>
</feature>
<feature type="sequence variant" id="VAR_018483" description="In CMD1O; dbSNP:rs72559751." evidence="6">
    <original>A</original>
    <variation>T</variation>
    <location>
        <position position="1513"/>
    </location>
</feature>
<feature type="sequence variant" id="VAR_066210" description="In ATFB12; compromises adenine nucleotide-dependent induction of KATP current; mutant ABCC9 that is coexpressed with KCNJ11 pore generates an aberrant channel that retains ATP-induced inhibition of potassium current, but shows a blunted response to ADP; dbSNP:rs387906805." evidence="7">
    <original>T</original>
    <variation>I</variation>
    <location>
        <position position="1547"/>
    </location>
</feature>
<feature type="sequence conflict" description="In Ref. 1; AAC16057/AAC16058." evidence="15" ref="1">
    <original>F</original>
    <variation>S</variation>
    <location>
        <position position="586"/>
    </location>
</feature>
<feature type="sequence conflict" description="In Ref. 1; AAC16057/AAC16058." evidence="15" ref="1">
    <original>S</original>
    <variation>F</variation>
    <location>
        <position position="589"/>
    </location>
</feature>
<feature type="sequence conflict" description="In Ref. 1; AAC16057/AAC16058." evidence="15" ref="1">
    <original>I</original>
    <variation>M</variation>
    <location>
        <position position="1503"/>
    </location>
</feature>
<name>ABCC9_HUMAN</name>
<proteinExistence type="evidence at protein level"/>
<reference key="1">
    <citation type="journal article" date="1998" name="Physiol. Rev.">
        <title>Toward understanding the assembly and structure of KATP channels.</title>
        <authorList>
            <person name="Aguilar-Bryan L."/>
            <person name="Clement J.P. IV"/>
            <person name="Gonzalez G."/>
            <person name="Kunjilwar K."/>
            <person name="Babenko A."/>
            <person name="Bryan J."/>
        </authorList>
    </citation>
    <scope>NUCLEOTIDE SEQUENCE [GENOMIC DNA] (ISOFORMS SUR2A AND SUR2B)</scope>
    <scope>REVIEW</scope>
</reference>
<reference key="2">
    <citation type="journal article" date="2006" name="Nature">
        <title>The finished DNA sequence of human chromosome 12.</title>
        <authorList>
            <person name="Scherer S.E."/>
            <person name="Muzny D.M."/>
            <person name="Buhay C.J."/>
            <person name="Chen R."/>
            <person name="Cree A."/>
            <person name="Ding Y."/>
            <person name="Dugan-Rocha S."/>
            <person name="Gill R."/>
            <person name="Gunaratne P."/>
            <person name="Harris R.A."/>
            <person name="Hawes A.C."/>
            <person name="Hernandez J."/>
            <person name="Hodgson A.V."/>
            <person name="Hume J."/>
            <person name="Jackson A."/>
            <person name="Khan Z.M."/>
            <person name="Kovar-Smith C."/>
            <person name="Lewis L.R."/>
            <person name="Lozado R.J."/>
            <person name="Metzker M.L."/>
            <person name="Milosavljevic A."/>
            <person name="Miner G.R."/>
            <person name="Montgomery K.T."/>
            <person name="Morgan M.B."/>
            <person name="Nazareth L.V."/>
            <person name="Scott G."/>
            <person name="Sodergren E."/>
            <person name="Song X.-Z."/>
            <person name="Steffen D."/>
            <person name="Lovering R.C."/>
            <person name="Wheeler D.A."/>
            <person name="Worley K.C."/>
            <person name="Yuan Y."/>
            <person name="Zhang Z."/>
            <person name="Adams C.Q."/>
            <person name="Ansari-Lari M.A."/>
            <person name="Ayele M."/>
            <person name="Brown M.J."/>
            <person name="Chen G."/>
            <person name="Chen Z."/>
            <person name="Clerc-Blankenburg K.P."/>
            <person name="Davis C."/>
            <person name="Delgado O."/>
            <person name="Dinh H.H."/>
            <person name="Draper H."/>
            <person name="Gonzalez-Garay M.L."/>
            <person name="Havlak P."/>
            <person name="Jackson L.R."/>
            <person name="Jacob L.S."/>
            <person name="Kelly S.H."/>
            <person name="Li L."/>
            <person name="Li Z."/>
            <person name="Liu J."/>
            <person name="Liu W."/>
            <person name="Lu J."/>
            <person name="Maheshwari M."/>
            <person name="Nguyen B.-V."/>
            <person name="Okwuonu G.O."/>
            <person name="Pasternak S."/>
            <person name="Perez L.M."/>
            <person name="Plopper F.J.H."/>
            <person name="Santibanez J."/>
            <person name="Shen H."/>
            <person name="Tabor P.E."/>
            <person name="Verduzco D."/>
            <person name="Waldron L."/>
            <person name="Wang Q."/>
            <person name="Williams G.A."/>
            <person name="Zhang J."/>
            <person name="Zhou J."/>
            <person name="Allen C.C."/>
            <person name="Amin A.G."/>
            <person name="Anyalebechi V."/>
            <person name="Bailey M."/>
            <person name="Barbaria J.A."/>
            <person name="Bimage K.E."/>
            <person name="Bryant N.P."/>
            <person name="Burch P.E."/>
            <person name="Burkett C.E."/>
            <person name="Burrell K.L."/>
            <person name="Calderon E."/>
            <person name="Cardenas V."/>
            <person name="Carter K."/>
            <person name="Casias K."/>
            <person name="Cavazos I."/>
            <person name="Cavazos S.R."/>
            <person name="Ceasar H."/>
            <person name="Chacko J."/>
            <person name="Chan S.N."/>
            <person name="Chavez D."/>
            <person name="Christopoulos C."/>
            <person name="Chu J."/>
            <person name="Cockrell R."/>
            <person name="Cox C.D."/>
            <person name="Dang M."/>
            <person name="Dathorne S.R."/>
            <person name="David R."/>
            <person name="Davis C.M."/>
            <person name="Davy-Carroll L."/>
            <person name="Deshazo D.R."/>
            <person name="Donlin J.E."/>
            <person name="D'Souza L."/>
            <person name="Eaves K.A."/>
            <person name="Egan A."/>
            <person name="Emery-Cohen A.J."/>
            <person name="Escotto M."/>
            <person name="Flagg N."/>
            <person name="Forbes L.D."/>
            <person name="Gabisi A.M."/>
            <person name="Garza M."/>
            <person name="Hamilton C."/>
            <person name="Henderson N."/>
            <person name="Hernandez O."/>
            <person name="Hines S."/>
            <person name="Hogues M.E."/>
            <person name="Huang M."/>
            <person name="Idlebird D.G."/>
            <person name="Johnson R."/>
            <person name="Jolivet A."/>
            <person name="Jones S."/>
            <person name="Kagan R."/>
            <person name="King L.M."/>
            <person name="Leal B."/>
            <person name="Lebow H."/>
            <person name="Lee S."/>
            <person name="LeVan J.M."/>
            <person name="Lewis L.C."/>
            <person name="London P."/>
            <person name="Lorensuhewa L.M."/>
            <person name="Loulseged H."/>
            <person name="Lovett D.A."/>
            <person name="Lucier A."/>
            <person name="Lucier R.L."/>
            <person name="Ma J."/>
            <person name="Madu R.C."/>
            <person name="Mapua P."/>
            <person name="Martindale A.D."/>
            <person name="Martinez E."/>
            <person name="Massey E."/>
            <person name="Mawhiney S."/>
            <person name="Meador M.G."/>
            <person name="Mendez S."/>
            <person name="Mercado C."/>
            <person name="Mercado I.C."/>
            <person name="Merritt C.E."/>
            <person name="Miner Z.L."/>
            <person name="Minja E."/>
            <person name="Mitchell T."/>
            <person name="Mohabbat F."/>
            <person name="Mohabbat K."/>
            <person name="Montgomery B."/>
            <person name="Moore N."/>
            <person name="Morris S."/>
            <person name="Munidasa M."/>
            <person name="Ngo R.N."/>
            <person name="Nguyen N.B."/>
            <person name="Nickerson E."/>
            <person name="Nwaokelemeh O.O."/>
            <person name="Nwokenkwo S."/>
            <person name="Obregon M."/>
            <person name="Oguh M."/>
            <person name="Oragunye N."/>
            <person name="Oviedo R.J."/>
            <person name="Parish B.J."/>
            <person name="Parker D.N."/>
            <person name="Parrish J."/>
            <person name="Parks K.L."/>
            <person name="Paul H.A."/>
            <person name="Payton B.A."/>
            <person name="Perez A."/>
            <person name="Perrin W."/>
            <person name="Pickens A."/>
            <person name="Primus E.L."/>
            <person name="Pu L.-L."/>
            <person name="Puazo M."/>
            <person name="Quiles M.M."/>
            <person name="Quiroz J.B."/>
            <person name="Rabata D."/>
            <person name="Reeves K."/>
            <person name="Ruiz S.J."/>
            <person name="Shao H."/>
            <person name="Sisson I."/>
            <person name="Sonaike T."/>
            <person name="Sorelle R.P."/>
            <person name="Sutton A.E."/>
            <person name="Svatek A.F."/>
            <person name="Svetz L.A."/>
            <person name="Tamerisa K.S."/>
            <person name="Taylor T.R."/>
            <person name="Teague B."/>
            <person name="Thomas N."/>
            <person name="Thorn R.D."/>
            <person name="Trejos Z.Y."/>
            <person name="Trevino B.K."/>
            <person name="Ukegbu O.N."/>
            <person name="Urban J.B."/>
            <person name="Vasquez L.I."/>
            <person name="Vera V.A."/>
            <person name="Villasana D.M."/>
            <person name="Wang L."/>
            <person name="Ward-Moore S."/>
            <person name="Warren J.T."/>
            <person name="Wei X."/>
            <person name="White F."/>
            <person name="Williamson A.L."/>
            <person name="Wleczyk R."/>
            <person name="Wooden H.S."/>
            <person name="Wooden S.H."/>
            <person name="Yen J."/>
            <person name="Yoon L."/>
            <person name="Yoon V."/>
            <person name="Zorrilla S.E."/>
            <person name="Nelson D."/>
            <person name="Kucherlapati R."/>
            <person name="Weinstock G."/>
            <person name="Gibbs R.A."/>
        </authorList>
    </citation>
    <scope>NUCLEOTIDE SEQUENCE [LARGE SCALE GENOMIC DNA]</scope>
</reference>
<reference key="3">
    <citation type="journal article" date="1998" name="Circ. Res.">
        <title>Reconstituted human cardiac KATP channels: functional identity with the native channels from the sarcolemma of human ventricular cells.</title>
        <authorList>
            <person name="Babenko A.P."/>
            <person name="Gonzalez G."/>
            <person name="Aguilar-Bryan L."/>
            <person name="Bryan J."/>
        </authorList>
    </citation>
    <scope>FUNCTION</scope>
    <scope>SUBUNIT</scope>
</reference>
<reference key="4">
    <citation type="journal article" date="2013" name="Mol. Psychiatry">
        <title>A K(ATP) channel gene effect on sleep duration: from genome-wide association studies to function in Drosophila.</title>
        <authorList>
            <person name="Allebrandt K.V."/>
            <person name="Amin N."/>
            <person name="Muller-Myhsok B."/>
            <person name="Esko T."/>
            <person name="Teder-Laving M."/>
            <person name="Azevedo R.V."/>
            <person name="Hayward C."/>
            <person name="van Mill J."/>
            <person name="Vogelzangs N."/>
            <person name="Green E.W."/>
            <person name="Melville S.A."/>
            <person name="Lichtner P."/>
            <person name="Wichmann H.E."/>
            <person name="Oostra B.A."/>
            <person name="Janssens A.C."/>
            <person name="Campbell H."/>
            <person name="Wilson J.F."/>
            <person name="Hicks A.A."/>
            <person name="Pramstaller P.P."/>
            <person name="Dogas Z."/>
            <person name="Rudan I."/>
            <person name="Merrow M."/>
            <person name="Penninx B."/>
            <person name="Kyriacou C.P."/>
            <person name="Metspalu A."/>
            <person name="van Duijn C.M."/>
            <person name="Meitinger T."/>
            <person name="Roenneberg T."/>
        </authorList>
    </citation>
    <scope>POSSIBLE FUNCTION IN REGULATION OF SLEEP DURATION</scope>
</reference>
<reference key="5">
    <citation type="journal article" date="2004" name="Nat. Genet.">
        <title>ABCC9 mutations identified in human dilated cardiomyopathy disrupt catalytic KATP channel gating.</title>
        <authorList>
            <person name="Bienengraeber M."/>
            <person name="Olson T.M."/>
            <person name="Selivanov V.A."/>
            <person name="Kathmann E.C."/>
            <person name="O'Cochlain F."/>
            <person name="Gao F."/>
            <person name="Karger A.B."/>
            <person name="Ballew J.D."/>
            <person name="Hodgson D.M."/>
            <person name="Zingman L.V."/>
            <person name="Pang Y.-P."/>
            <person name="Alekseev A.E."/>
            <person name="Terzic A."/>
        </authorList>
    </citation>
    <scope>VARIANT CMD1O THR-1513</scope>
</reference>
<reference key="6">
    <citation type="journal article" date="2007" name="Nat. Clin. Pract. Cardiovasc. Med.">
        <title>KATP channel mutation confers risk for vein of Marshall adrenergic atrial fibrillation.</title>
        <authorList>
            <person name="Olson T.M."/>
            <person name="Alekseev A.E."/>
            <person name="Moreau C."/>
            <person name="Liu X.K."/>
            <person name="Zingman L.V."/>
            <person name="Miki T."/>
            <person name="Seino S."/>
            <person name="Asirvatham S.J."/>
            <person name="Jahangir A."/>
            <person name="Terzic A."/>
        </authorList>
    </citation>
    <scope>VARIANT ATFB12 ILE-1547</scope>
    <scope>CHARACTERIZATION OF VARIANT ATFB12 ILE-1547</scope>
</reference>
<reference key="7">
    <citation type="journal article" date="2012" name="Am. J. Hum. Genet.">
        <title>Cantu syndrome is caused by mutations in ABCC9.</title>
        <authorList>
            <person name="van Bon B.W."/>
            <person name="Gilissen C."/>
            <person name="Grange D.K."/>
            <person name="Hennekam R.C."/>
            <person name="Kayserili H."/>
            <person name="Engels H."/>
            <person name="Reutter H."/>
            <person name="Ostergaard J.R."/>
            <person name="Morava E."/>
            <person name="Tsiakas K."/>
            <person name="Isidor B."/>
            <person name="Le Merrer M."/>
            <person name="Eser M."/>
            <person name="Wieskamp N."/>
            <person name="de Vries P."/>
            <person name="Steehouwer M."/>
            <person name="Veltman J.A."/>
            <person name="Robertson S.P."/>
            <person name="Brunner H.G."/>
            <person name="de Vries B.B."/>
            <person name="Hoischen A."/>
        </authorList>
    </citation>
    <scope>VARIANTS HTOCD VAL-478; TYR-1043; GLN-1154 AND TRP-1154</scope>
</reference>
<reference key="8">
    <citation type="journal article" date="2012" name="Nat. Genet.">
        <title>Dominant missense mutations in ABCC9 cause Cantu syndrome.</title>
        <authorList>
            <person name="Harakalova M."/>
            <person name="van Harssel J.J."/>
            <person name="Terhal P.A."/>
            <person name="van Lieshout S."/>
            <person name="Duran K."/>
            <person name="Renkens I."/>
            <person name="Amor D.J."/>
            <person name="Wilson L.C."/>
            <person name="Kirk E.P."/>
            <person name="Turner C.L."/>
            <person name="Shears D."/>
            <person name="Garcia-Minaur S."/>
            <person name="Lees M.M."/>
            <person name="Ross A."/>
            <person name="Venselaar H."/>
            <person name="Vriend G."/>
            <person name="Takanari H."/>
            <person name="Rook M.B."/>
            <person name="van der Heyden M.A."/>
            <person name="Asselbergs F.W."/>
            <person name="Breur H.M."/>
            <person name="Swinkels M.E."/>
            <person name="Scurr I.J."/>
            <person name="Smithson S.F."/>
            <person name="Knoers N.V."/>
            <person name="van der Smagt J.J."/>
            <person name="Nijman I.J."/>
            <person name="Kloosterman W.P."/>
            <person name="van Haelst M.M."/>
            <person name="van Haaften G."/>
            <person name="Cuppen E."/>
        </authorList>
    </citation>
    <scope>VARIANTS HTOCD TYR-60; GLU-207; CYS-380; LEU-432; PRO-1020; SER-1039; TYR-1054; HIS-1116; CYS-1116; GLN-1154 AND TRP-1154</scope>
    <scope>CHARACTERIZATION OF VARIANTS HTOCD LEU-432; HIS-1116 AND GLN-1154</scope>
</reference>
<reference key="9">
    <citation type="journal article" date="2015" name="J. Gen. Physiol.">
        <title>Differential mechanisms of Cantu syndrome-associated gain of function mutations in the ABCC9 (SUR2) subunit of the KATP channel.</title>
        <authorList>
            <person name="Cooper P.E."/>
            <person name="Sala-Rabanal M."/>
            <person name="Lee S.J."/>
            <person name="Nichols C.G."/>
        </authorList>
    </citation>
    <scope>VARIANTS HTOCD LEU-432; VAL-478 AND TYR-1043</scope>
    <scope>CHARACTERIZATION OF VARIANTS HTOCD LEU-432; VAL-478 AND TYR-1043</scope>
</reference>
<reference key="10">
    <citation type="journal article" date="2019" name="Am. J. Hum. Genet.">
        <title>De Novo Variants Disturbing the Transactivation Capacity of POU3F3 Cause a Characteristic Neurodevelopmental Disorder.</title>
        <authorList>
            <consortium name="DDD Study"/>
            <person name="Snijders Blok L."/>
            <person name="Kleefstra T."/>
            <person name="Venselaar H."/>
            <person name="Maas S."/>
            <person name="Kroes H.Y."/>
            <person name="Lachmeijer A.M.A."/>
            <person name="van Gassen K.L.I."/>
            <person name="Firth H.V."/>
            <person name="Tomkins S."/>
            <person name="Bodek S."/>
            <person name="Ounap K."/>
            <person name="Wojcik M.H."/>
            <person name="Cunniff C."/>
            <person name="Bergstrom K."/>
            <person name="Powis Z."/>
            <person name="Tang S."/>
            <person name="Shinde D.N."/>
            <person name="Au C."/>
            <person name="Iglesias A.D."/>
            <person name="Izumi K."/>
            <person name="Leonard J."/>
            <person name="Abou Tayoun A."/>
            <person name="Baker S.W."/>
            <person name="Tartaglia M."/>
            <person name="Niceta M."/>
            <person name="Dentici M.L."/>
            <person name="Okamoto N."/>
            <person name="Miyake N."/>
            <person name="Matsumoto N."/>
            <person name="Vitobello A."/>
            <person name="Faivre L."/>
            <person name="Philippe C."/>
            <person name="Gilissen C."/>
            <person name="Wiel L."/>
            <person name="Pfundt R."/>
            <person name="Deriziotis P."/>
            <person name="Brunner H.G."/>
            <person name="Fisher S.E."/>
        </authorList>
    </citation>
    <scope>VARIANT ARG-1160</scope>
</reference>
<reference key="11">
    <citation type="journal article" date="2019" name="Nat. Commun.">
        <title>ABCC9-related Intellectual disability Myopathy Syndrome is a KATP channelopathy with loss-of-function mutations in ABCC9.</title>
        <authorList>
            <person name="Smeland M.F."/>
            <person name="McClenaghan C."/>
            <person name="Roessler H.I."/>
            <person name="Savelberg S."/>
            <person name="Hansen G.A.M."/>
            <person name="Hjellnes H."/>
            <person name="Arntzen K.A."/>
            <person name="Mueller K.I."/>
            <person name="Dybesland A.R."/>
            <person name="Harter T."/>
            <person name="Sala-Rabanal M."/>
            <person name="Emfinger C.H."/>
            <person name="Huang Y."/>
            <person name="Singareddy S.S."/>
            <person name="Gunn J."/>
            <person name="Wozniak D.F."/>
            <person name="Kovacs A."/>
            <person name="Massink M."/>
            <person name="Tessadori F."/>
            <person name="Kamel S.M."/>
            <person name="Bakkers J."/>
            <person name="Remedi M.S."/>
            <person name="Van Ghelue M."/>
            <person name="Nichols C.G."/>
            <person name="van Haaften G."/>
        </authorList>
    </citation>
    <scope>INVOLVEMENT IN IDMYS</scope>
</reference>
<comment type="function">
    <text evidence="1 13">Subunit of ATP-sensitive potassium channels (KATP). Can form cardiac and smooth muscle-type KATP channels with KCNJ11. KCNJ11 forms the channel pore while ABCC9 is required for activation and regulation (PubMed:9831708). Can form a sulfonylurea-sensitive but ATP-insensitive potassium channel with KCNJ8 (By similarity).</text>
</comment>
<comment type="subunit">
    <text evidence="1 13">Interacts with KCNJ11 (PubMed:9831708). Interacts with KCNJ8 (By similarity).</text>
</comment>
<comment type="subcellular location">
    <subcellularLocation>
        <location evidence="4">Membrane</location>
        <topology evidence="4">Multi-pass membrane protein</topology>
    </subcellularLocation>
</comment>
<comment type="alternative products">
    <event type="alternative splicing"/>
    <isoform>
        <id>O60706-1</id>
        <name>SUR2A</name>
        <sequence type="displayed"/>
    </isoform>
    <isoform>
        <id>O60706-2</id>
        <name>SUR2B</name>
        <sequence type="described" ref="VSP_000058"/>
    </isoform>
</comment>
<comment type="disease" evidence="6">
    <disease id="DI-00221">
        <name>Cardiomyopathy, dilated, 1O</name>
        <acronym>CMD1O</acronym>
        <description>A disorder characterized by ventricular dilation and impaired systolic function, resulting in congestive heart failure and arrhythmia. Patients are at risk of premature death.</description>
        <dbReference type="MIM" id="608569"/>
    </disease>
    <text>The disease is caused by variants affecting the gene represented in this entry.</text>
</comment>
<comment type="disease" evidence="7">
    <disease id="DI-03143">
        <name>Atrial fibrillation, familial, 12</name>
        <acronym>ATFB12</acronym>
        <description>A familial form of atrial fibrillation, a common sustained cardiac rhythm disturbance. Atrial fibrillation is characterized by disorganized atrial electrical activity and ineffective atrial contraction promoting blood stasis in the atria and reduces ventricular filling. It can result in palpitations, syncope, thromboembolic stroke, and congestive heart failure.</description>
        <dbReference type="MIM" id="614050"/>
    </disease>
    <text>The disease is caused by variants affecting the gene represented in this entry.</text>
</comment>
<comment type="disease" evidence="8 9 10">
    <disease id="DI-03485">
        <name>Hypertrichotic osteochondrodysplasia</name>
        <acronym>HTOCD</acronym>
        <description>A rare disorder characterized by congenital hypertrichosis, neonatal macrosomia, a distinct osteochondrodysplasia, and cardiomegaly. The hypertrichosis leads to thick scalp hair, which extends onto the forehead, and a general increase in body hair. In addition, macrocephaly and coarse facial features, including a broad nasal bridge, epicanthal folds, a wide mouth, and full lips, can be suggestive of a storage disorder. About half of affected individuals are macrosomic and edematous at birth, whereas in childhood they usually have a muscular appearance with little subcutaneous fat. Thickened calvarium, narrow thorax, wide ribs, flattened or ovoid vertebral bodies, coxa valga, osteopenia, enlarged medullary canals, and metaphyseal widening of long bones have been reported. Cardiac manifestations such as patent ductus arteriosus, ventricular hypertrophy, pulmonary hypertension, and pericardial effusions are present in approximately 80% of cases. Motor development is usually delayed due to hypotonia. Most patients have a mild speech delay, and a small percentage have learning difficulties or intellectual disability.</description>
        <dbReference type="MIM" id="239850"/>
    </disease>
    <text>The disease is caused by variants affecting the gene represented in this entry.</text>
</comment>
<comment type="disease" evidence="12">
    <disease id="DI-06322">
        <name>Intellectual disability and myopathy syndrome</name>
        <acronym>IDMYS</acronym>
        <description>An autosomal recessive disorder characterized by global developmental delay, mildly impaired intellectual development, hypotonia, muscle weakness and fatigue, and white matter abnormalities on brain imaging. Variable additional features may include sensorineural hearing loss, dysmorphic facies, and progressive heart disease.</description>
        <dbReference type="MIM" id="619719"/>
    </disease>
    <text>The disease is caused by variants affecting the gene represented in this entry.</text>
</comment>
<comment type="miscellaneous">
    <text evidence="16">May contribute to the regulation of sleep duration. An intronic variant of this gene may account for about 5% of the variation of sleep duration between individuals (PubMed:22105623). Sleep duration is influenced both by environmental and genetic factors, with an estimated heritability of about 40%. Numerous genes are expected to contribute to the regulation of sleep duration.</text>
</comment>
<comment type="similarity">
    <text evidence="15">Belongs to the ABC transporter superfamily. ABCC family. Conjugate transporter (TC 3.A.1.208) subfamily.</text>
</comment>
<comment type="online information" name="Protein Spotlight">
    <link uri="https://www.proteinspotlight.org/back_issues/139"/>
    <text>On The Other Side - Issue 139 of June 2012</text>
</comment>
<comment type="online information" name="ABCMdb">
    <link uri="http://abcm2.hegelab.org/search"/>
    <text>Database for mutations in ABC proteins</text>
</comment>
<organism>
    <name type="scientific">Homo sapiens</name>
    <name type="common">Human</name>
    <dbReference type="NCBI Taxonomy" id="9606"/>
    <lineage>
        <taxon>Eukaryota</taxon>
        <taxon>Metazoa</taxon>
        <taxon>Chordata</taxon>
        <taxon>Craniata</taxon>
        <taxon>Vertebrata</taxon>
        <taxon>Euteleostomi</taxon>
        <taxon>Mammalia</taxon>
        <taxon>Eutheria</taxon>
        <taxon>Euarchontoglires</taxon>
        <taxon>Primates</taxon>
        <taxon>Haplorrhini</taxon>
        <taxon>Catarrhini</taxon>
        <taxon>Hominidae</taxon>
        <taxon>Homo</taxon>
    </lineage>
</organism>
<sequence>MSLSFCGNNISSYNINDGVLQNSCFVDALNLVPHVFLLFITFPILFIGWGSQSSKVQIHHNTWLHFPGHNLRWILTFALLFVHVCEIAEGIVSDSRRESRHLHLFMPAVMGFVATTTSIVYYHNIETSNFPKLLLALFLYWVMAFITKTIKLVKYCQSGLDISNLRFCITGMMVILNGLLMAVEINVIRVRRYVFFMNPQKVKPPEDLQDLGVRFLQPFVNLLSKATYWWMNTLIISAHKKPIDLKAIGKLPIAMRAVTNYVCLKDAYEEQKKKVADHPNRTPSIWLAMYRAFGRPILLSSTFRYLADLLGFAGPLCISGIVQRVNETQNGTNNTTGISETLSSKEFLENAYVLAVLLFLALILQRTFLQASYYVTIETGINLRGALLAMIYNKILRLSTSNLSMGEMTLGQINNLVAIETNQLMWFLFLCPNLWAMPVQIIMGVILLYNLLGSSALVGAAVIVLLAPIQYFIATKLAEAQKSTLDYSTERLKKTNEILKGIKLLKLYAWEHIFCKSVEETRMKELSSLKTFALYTSLSIFMNAAIPIAAVLATFVTHAYASGNNLKPAEAFASLSLFHILVTPLFLLSTVVRFAVKAIISVQKLNEFLLSDEIGDDSWRTGESSLPFESCKKHTGVQPKTINRKQPGRYHLDSYEQSTRRLRPAETEDIAIKVTNGYFSWGSGLATLSNIDIRIPTGQLTMIVGQVGCGKSSLLLAILGEMQTLEGKVHWSNVNESEPSFEATRSRNRYSVAYAAQKPWLLNATVEENITFGSPFNKQRYKAVTDACSLQPDIDLLPFGDQTEIGERGINLSGGQRQRICVARALYQNTNIVFLDDPFSALDIHLSDHLMQEGILKFLQDDKRTLVLVTHKLQYLTHADWIIAMKDGSVLREGTLKDIQTKDVELYEHWKTLMNRQDQELEKDMEADQTTLERKTLRRAMYSREAKAQMEDEDEEEEEEEDEDDNMSTVMRLRTKMPWKTCWRYLTSGGFFLLILMIFSKLLKHSVIVAIDYWLATWTSEYSINNTGKADQTYYVAGFSILCGAGIFLCLVTSLTVEWMGLTAAKNLHHNLLNKIILGPIRFFDTTPLGLILNRFSADTNIIDQHIPPTLESLTRSTLLCLSAIGMISYATPVFLVALLPLGVAFYFIQKYFRVASKDLQELDDSTQLPLLCHFSETAEGLTTIRAFRHETRFKQRMLELTDTNNIAYLFLSAANRWLEVRTDYLGACIVLTASIASISGSSNSGLVGLGLLYALTITNYLNWVVRNLADLEVQMGAVKKVNSFLTMESENYEGTMDPSQVPEHWPQEGEIKIHDLCVRYENNLKPVLKHVKAYIKPGQKVGICGRTGSGKSSLSLAFFRMVDIFDGKIVIDGIDISKLPLHTLRSRLSIILQDPILFSGSIRFNLDPECKCTDDRLWEALEIAQLKNMVKSLPGGLDAVVTEGGENFSVGQRQLFCLARAFVRKSSILIMDEATASIDMATENILQKVVMTAFADRTVVTIAHRVSSIMDAGLVLVFSEGILVECDTVPNLLAHKNGLFSTLVMTNK</sequence>
<gene>
    <name type="primary">ABCC9</name>
    <name evidence="14" type="synonym">SUR2</name>
</gene>
<keyword id="KW-0025">Alternative splicing</keyword>
<keyword id="KW-0067">ATP-binding</keyword>
<keyword id="KW-1020">Atrial fibrillation</keyword>
<keyword id="KW-0122">Cardiomyopathy</keyword>
<keyword id="KW-0225">Disease variant</keyword>
<keyword id="KW-0325">Glycoprotein</keyword>
<keyword id="KW-0991">Intellectual disability</keyword>
<keyword id="KW-0472">Membrane</keyword>
<keyword id="KW-0547">Nucleotide-binding</keyword>
<keyword id="KW-1267">Proteomics identification</keyword>
<keyword id="KW-0675">Receptor</keyword>
<keyword id="KW-1185">Reference proteome</keyword>
<keyword id="KW-0677">Repeat</keyword>
<keyword id="KW-0812">Transmembrane</keyword>
<keyword id="KW-1133">Transmembrane helix</keyword>
<keyword id="KW-0813">Transport</keyword>
<evidence type="ECO:0000250" key="1">
    <source>
        <dbReference type="UniProtKB" id="P70170"/>
    </source>
</evidence>
<evidence type="ECO:0000255" key="2"/>
<evidence type="ECO:0000255" key="3">
    <source>
        <dbReference type="PROSITE-ProRule" id="PRU00434"/>
    </source>
</evidence>
<evidence type="ECO:0000255" key="4">
    <source>
        <dbReference type="PROSITE-ProRule" id="PRU00441"/>
    </source>
</evidence>
<evidence type="ECO:0000256" key="5">
    <source>
        <dbReference type="SAM" id="MobiDB-lite"/>
    </source>
</evidence>
<evidence type="ECO:0000269" key="6">
    <source>
    </source>
</evidence>
<evidence type="ECO:0000269" key="7">
    <source>
    </source>
</evidence>
<evidence type="ECO:0000269" key="8">
    <source>
    </source>
</evidence>
<evidence type="ECO:0000269" key="9">
    <source>
    </source>
</evidence>
<evidence type="ECO:0000269" key="10">
    <source>
    </source>
</evidence>
<evidence type="ECO:0000269" key="11">
    <source>
    </source>
</evidence>
<evidence type="ECO:0000269" key="12">
    <source>
    </source>
</evidence>
<evidence type="ECO:0000269" key="13">
    <source>
    </source>
</evidence>
<evidence type="ECO:0000303" key="14">
    <source>
    </source>
</evidence>
<evidence type="ECO:0000305" key="15"/>
<evidence type="ECO:0000305" key="16">
    <source>
    </source>
</evidence>
<protein>
    <recommendedName>
        <fullName>ATP-binding cassette sub-family C member 9</fullName>
    </recommendedName>
    <alternativeName>
        <fullName>Sulfonylurea receptor 2</fullName>
    </alternativeName>
</protein>
<dbReference type="EMBL" id="AF061323">
    <property type="protein sequence ID" value="AAC16057.1"/>
    <property type="molecule type" value="Genomic_DNA"/>
</dbReference>
<dbReference type="EMBL" id="AF061289">
    <property type="protein sequence ID" value="AAC16057.1"/>
    <property type="status" value="JOINED"/>
    <property type="molecule type" value="Genomic_DNA"/>
</dbReference>
<dbReference type="EMBL" id="AF061290">
    <property type="protein sequence ID" value="AAC16057.1"/>
    <property type="status" value="JOINED"/>
    <property type="molecule type" value="Genomic_DNA"/>
</dbReference>
<dbReference type="EMBL" id="AF061291">
    <property type="protein sequence ID" value="AAC16057.1"/>
    <property type="status" value="JOINED"/>
    <property type="molecule type" value="Genomic_DNA"/>
</dbReference>
<dbReference type="EMBL" id="AF061292">
    <property type="protein sequence ID" value="AAC16057.1"/>
    <property type="status" value="JOINED"/>
    <property type="molecule type" value="Genomic_DNA"/>
</dbReference>
<dbReference type="EMBL" id="AF061293">
    <property type="protein sequence ID" value="AAC16057.1"/>
    <property type="status" value="JOINED"/>
    <property type="molecule type" value="Genomic_DNA"/>
</dbReference>
<dbReference type="EMBL" id="AF061294">
    <property type="protein sequence ID" value="AAC16057.1"/>
    <property type="status" value="JOINED"/>
    <property type="molecule type" value="Genomic_DNA"/>
</dbReference>
<dbReference type="EMBL" id="AF061295">
    <property type="protein sequence ID" value="AAC16057.1"/>
    <property type="status" value="JOINED"/>
    <property type="molecule type" value="Genomic_DNA"/>
</dbReference>
<dbReference type="EMBL" id="AF061296">
    <property type="protein sequence ID" value="AAC16057.1"/>
    <property type="status" value="JOINED"/>
    <property type="molecule type" value="Genomic_DNA"/>
</dbReference>
<dbReference type="EMBL" id="AF061297">
    <property type="protein sequence ID" value="AAC16057.1"/>
    <property type="status" value="JOINED"/>
    <property type="molecule type" value="Genomic_DNA"/>
</dbReference>
<dbReference type="EMBL" id="AF061298">
    <property type="protein sequence ID" value="AAC16057.1"/>
    <property type="status" value="JOINED"/>
    <property type="molecule type" value="Genomic_DNA"/>
</dbReference>
<dbReference type="EMBL" id="AF061299">
    <property type="protein sequence ID" value="AAC16057.1"/>
    <property type="status" value="JOINED"/>
    <property type="molecule type" value="Genomic_DNA"/>
</dbReference>
<dbReference type="EMBL" id="AF061300">
    <property type="protein sequence ID" value="AAC16057.1"/>
    <property type="status" value="JOINED"/>
    <property type="molecule type" value="Genomic_DNA"/>
</dbReference>
<dbReference type="EMBL" id="AF061301">
    <property type="protein sequence ID" value="AAC16057.1"/>
    <property type="status" value="JOINED"/>
    <property type="molecule type" value="Genomic_DNA"/>
</dbReference>
<dbReference type="EMBL" id="AF061302">
    <property type="protein sequence ID" value="AAC16057.1"/>
    <property type="status" value="JOINED"/>
    <property type="molecule type" value="Genomic_DNA"/>
</dbReference>
<dbReference type="EMBL" id="AF061303">
    <property type="protein sequence ID" value="AAC16057.1"/>
    <property type="status" value="JOINED"/>
    <property type="molecule type" value="Genomic_DNA"/>
</dbReference>
<dbReference type="EMBL" id="AF061304">
    <property type="protein sequence ID" value="AAC16057.1"/>
    <property type="status" value="JOINED"/>
    <property type="molecule type" value="Genomic_DNA"/>
</dbReference>
<dbReference type="EMBL" id="AF061305">
    <property type="protein sequence ID" value="AAC16057.1"/>
    <property type="status" value="JOINED"/>
    <property type="molecule type" value="Genomic_DNA"/>
</dbReference>
<dbReference type="EMBL" id="AF061306">
    <property type="protein sequence ID" value="AAC16057.1"/>
    <property type="status" value="JOINED"/>
    <property type="molecule type" value="Genomic_DNA"/>
</dbReference>
<dbReference type="EMBL" id="AF061307">
    <property type="protein sequence ID" value="AAC16057.1"/>
    <property type="status" value="JOINED"/>
    <property type="molecule type" value="Genomic_DNA"/>
</dbReference>
<dbReference type="EMBL" id="AF061308">
    <property type="protein sequence ID" value="AAC16057.1"/>
    <property type="status" value="JOINED"/>
    <property type="molecule type" value="Genomic_DNA"/>
</dbReference>
<dbReference type="EMBL" id="AF061309">
    <property type="protein sequence ID" value="AAC16057.1"/>
    <property type="status" value="JOINED"/>
    <property type="molecule type" value="Genomic_DNA"/>
</dbReference>
<dbReference type="EMBL" id="AF061310">
    <property type="protein sequence ID" value="AAC16057.1"/>
    <property type="status" value="JOINED"/>
    <property type="molecule type" value="Genomic_DNA"/>
</dbReference>
<dbReference type="EMBL" id="AF061311">
    <property type="protein sequence ID" value="AAC16057.1"/>
    <property type="status" value="JOINED"/>
    <property type="molecule type" value="Genomic_DNA"/>
</dbReference>
<dbReference type="EMBL" id="AF061312">
    <property type="protein sequence ID" value="AAC16057.1"/>
    <property type="status" value="JOINED"/>
    <property type="molecule type" value="Genomic_DNA"/>
</dbReference>
<dbReference type="EMBL" id="AF061313">
    <property type="protein sequence ID" value="AAC16057.1"/>
    <property type="status" value="JOINED"/>
    <property type="molecule type" value="Genomic_DNA"/>
</dbReference>
<dbReference type="EMBL" id="AF061314">
    <property type="protein sequence ID" value="AAC16057.1"/>
    <property type="status" value="JOINED"/>
    <property type="molecule type" value="Genomic_DNA"/>
</dbReference>
<dbReference type="EMBL" id="AF061315">
    <property type="protein sequence ID" value="AAC16057.1"/>
    <property type="status" value="JOINED"/>
    <property type="molecule type" value="Genomic_DNA"/>
</dbReference>
<dbReference type="EMBL" id="AF061316">
    <property type="protein sequence ID" value="AAC16057.1"/>
    <property type="status" value="JOINED"/>
    <property type="molecule type" value="Genomic_DNA"/>
</dbReference>
<dbReference type="EMBL" id="AF061317">
    <property type="protein sequence ID" value="AAC16057.1"/>
    <property type="status" value="JOINED"/>
    <property type="molecule type" value="Genomic_DNA"/>
</dbReference>
<dbReference type="EMBL" id="AF061318">
    <property type="protein sequence ID" value="AAC16057.1"/>
    <property type="status" value="JOINED"/>
    <property type="molecule type" value="Genomic_DNA"/>
</dbReference>
<dbReference type="EMBL" id="AF061319">
    <property type="protein sequence ID" value="AAC16057.1"/>
    <property type="status" value="JOINED"/>
    <property type="molecule type" value="Genomic_DNA"/>
</dbReference>
<dbReference type="EMBL" id="AF061320">
    <property type="protein sequence ID" value="AAC16057.1"/>
    <property type="status" value="JOINED"/>
    <property type="molecule type" value="Genomic_DNA"/>
</dbReference>
<dbReference type="EMBL" id="AF061321">
    <property type="protein sequence ID" value="AAC16057.1"/>
    <property type="status" value="JOINED"/>
    <property type="molecule type" value="Genomic_DNA"/>
</dbReference>
<dbReference type="EMBL" id="AF061322">
    <property type="protein sequence ID" value="AAC16057.1"/>
    <property type="status" value="JOINED"/>
    <property type="molecule type" value="Genomic_DNA"/>
</dbReference>
<dbReference type="EMBL" id="AF061324">
    <property type="protein sequence ID" value="AAC16058.1"/>
    <property type="molecule type" value="Genomic_DNA"/>
</dbReference>
<dbReference type="EMBL" id="AF061289">
    <property type="protein sequence ID" value="AAC16058.1"/>
    <property type="status" value="JOINED"/>
    <property type="molecule type" value="Genomic_DNA"/>
</dbReference>
<dbReference type="EMBL" id="AF061290">
    <property type="protein sequence ID" value="AAC16058.1"/>
    <property type="status" value="JOINED"/>
    <property type="molecule type" value="Genomic_DNA"/>
</dbReference>
<dbReference type="EMBL" id="AF061291">
    <property type="protein sequence ID" value="AAC16058.1"/>
    <property type="status" value="JOINED"/>
    <property type="molecule type" value="Genomic_DNA"/>
</dbReference>
<dbReference type="EMBL" id="AF061292">
    <property type="protein sequence ID" value="AAC16058.1"/>
    <property type="status" value="JOINED"/>
    <property type="molecule type" value="Genomic_DNA"/>
</dbReference>
<dbReference type="EMBL" id="AF061293">
    <property type="protein sequence ID" value="AAC16058.1"/>
    <property type="status" value="JOINED"/>
    <property type="molecule type" value="Genomic_DNA"/>
</dbReference>
<dbReference type="EMBL" id="AF061294">
    <property type="protein sequence ID" value="AAC16058.1"/>
    <property type="status" value="JOINED"/>
    <property type="molecule type" value="Genomic_DNA"/>
</dbReference>
<dbReference type="EMBL" id="AF061295">
    <property type="protein sequence ID" value="AAC16058.1"/>
    <property type="status" value="JOINED"/>
    <property type="molecule type" value="Genomic_DNA"/>
</dbReference>
<dbReference type="EMBL" id="AF061296">
    <property type="protein sequence ID" value="AAC16058.1"/>
    <property type="status" value="JOINED"/>
    <property type="molecule type" value="Genomic_DNA"/>
</dbReference>
<dbReference type="EMBL" id="AF061297">
    <property type="protein sequence ID" value="AAC16058.1"/>
    <property type="status" value="JOINED"/>
    <property type="molecule type" value="Genomic_DNA"/>
</dbReference>
<dbReference type="EMBL" id="AF061298">
    <property type="protein sequence ID" value="AAC16058.1"/>
    <property type="status" value="JOINED"/>
    <property type="molecule type" value="Genomic_DNA"/>
</dbReference>
<dbReference type="EMBL" id="AF061299">
    <property type="protein sequence ID" value="AAC16058.1"/>
    <property type="status" value="JOINED"/>
    <property type="molecule type" value="Genomic_DNA"/>
</dbReference>
<dbReference type="EMBL" id="AF061300">
    <property type="protein sequence ID" value="AAC16058.1"/>
    <property type="status" value="JOINED"/>
    <property type="molecule type" value="Genomic_DNA"/>
</dbReference>
<dbReference type="EMBL" id="AF061301">
    <property type="protein sequence ID" value="AAC16058.1"/>
    <property type="status" value="JOINED"/>
    <property type="molecule type" value="Genomic_DNA"/>
</dbReference>
<dbReference type="EMBL" id="AF061302">
    <property type="protein sequence ID" value="AAC16058.1"/>
    <property type="status" value="JOINED"/>
    <property type="molecule type" value="Genomic_DNA"/>
</dbReference>
<dbReference type="EMBL" id="AF061303">
    <property type="protein sequence ID" value="AAC16058.1"/>
    <property type="status" value="JOINED"/>
    <property type="molecule type" value="Genomic_DNA"/>
</dbReference>
<dbReference type="EMBL" id="AF061304">
    <property type="protein sequence ID" value="AAC16058.1"/>
    <property type="status" value="JOINED"/>
    <property type="molecule type" value="Genomic_DNA"/>
</dbReference>
<dbReference type="EMBL" id="AF061305">
    <property type="protein sequence ID" value="AAC16058.1"/>
    <property type="status" value="JOINED"/>
    <property type="molecule type" value="Genomic_DNA"/>
</dbReference>
<dbReference type="EMBL" id="AF061306">
    <property type="protein sequence ID" value="AAC16058.1"/>
    <property type="status" value="JOINED"/>
    <property type="molecule type" value="Genomic_DNA"/>
</dbReference>
<dbReference type="EMBL" id="AF061307">
    <property type="protein sequence ID" value="AAC16058.1"/>
    <property type="status" value="JOINED"/>
    <property type="molecule type" value="Genomic_DNA"/>
</dbReference>
<dbReference type="EMBL" id="AF061308">
    <property type="protein sequence ID" value="AAC16058.1"/>
    <property type="status" value="JOINED"/>
    <property type="molecule type" value="Genomic_DNA"/>
</dbReference>
<dbReference type="EMBL" id="AF061309">
    <property type="protein sequence ID" value="AAC16058.1"/>
    <property type="status" value="JOINED"/>
    <property type="molecule type" value="Genomic_DNA"/>
</dbReference>
<dbReference type="EMBL" id="AF061310">
    <property type="protein sequence ID" value="AAC16058.1"/>
    <property type="status" value="JOINED"/>
    <property type="molecule type" value="Genomic_DNA"/>
</dbReference>
<dbReference type="EMBL" id="AF061311">
    <property type="protein sequence ID" value="AAC16058.1"/>
    <property type="status" value="JOINED"/>
    <property type="molecule type" value="Genomic_DNA"/>
</dbReference>
<dbReference type="EMBL" id="AF061312">
    <property type="protein sequence ID" value="AAC16058.1"/>
    <property type="status" value="JOINED"/>
    <property type="molecule type" value="Genomic_DNA"/>
</dbReference>
<dbReference type="EMBL" id="AF061313">
    <property type="protein sequence ID" value="AAC16058.1"/>
    <property type="status" value="JOINED"/>
    <property type="molecule type" value="Genomic_DNA"/>
</dbReference>
<dbReference type="EMBL" id="AF061314">
    <property type="protein sequence ID" value="AAC16058.1"/>
    <property type="status" value="JOINED"/>
    <property type="molecule type" value="Genomic_DNA"/>
</dbReference>
<dbReference type="EMBL" id="AF061315">
    <property type="protein sequence ID" value="AAC16058.1"/>
    <property type="status" value="JOINED"/>
    <property type="molecule type" value="Genomic_DNA"/>
</dbReference>
<dbReference type="EMBL" id="AF061316">
    <property type="protein sequence ID" value="AAC16058.1"/>
    <property type="status" value="JOINED"/>
    <property type="molecule type" value="Genomic_DNA"/>
</dbReference>
<dbReference type="EMBL" id="AF061317">
    <property type="protein sequence ID" value="AAC16058.1"/>
    <property type="status" value="JOINED"/>
    <property type="molecule type" value="Genomic_DNA"/>
</dbReference>
<dbReference type="EMBL" id="AF061318">
    <property type="protein sequence ID" value="AAC16058.1"/>
    <property type="status" value="JOINED"/>
    <property type="molecule type" value="Genomic_DNA"/>
</dbReference>
<dbReference type="EMBL" id="AF061319">
    <property type="protein sequence ID" value="AAC16058.1"/>
    <property type="status" value="JOINED"/>
    <property type="molecule type" value="Genomic_DNA"/>
</dbReference>
<dbReference type="EMBL" id="AF061320">
    <property type="protein sequence ID" value="AAC16058.1"/>
    <property type="status" value="JOINED"/>
    <property type="molecule type" value="Genomic_DNA"/>
</dbReference>
<dbReference type="EMBL" id="AF061321">
    <property type="protein sequence ID" value="AAC16058.1"/>
    <property type="status" value="JOINED"/>
    <property type="molecule type" value="Genomic_DNA"/>
</dbReference>
<dbReference type="EMBL" id="AF061322">
    <property type="protein sequence ID" value="AAC16058.1"/>
    <property type="status" value="JOINED"/>
    <property type="molecule type" value="Genomic_DNA"/>
</dbReference>
<dbReference type="EMBL" id="AC008250">
    <property type="status" value="NOT_ANNOTATED_CDS"/>
    <property type="molecule type" value="Genomic_DNA"/>
</dbReference>
<dbReference type="EMBL" id="AC084806">
    <property type="status" value="NOT_ANNOTATED_CDS"/>
    <property type="molecule type" value="Genomic_DNA"/>
</dbReference>
<dbReference type="CCDS" id="CCDS8693.1">
    <molecule id="O60706-2"/>
</dbReference>
<dbReference type="CCDS" id="CCDS8694.1">
    <molecule id="O60706-1"/>
</dbReference>
<dbReference type="RefSeq" id="NP_001364202.1">
    <molecule id="O60706-2"/>
    <property type="nucleotide sequence ID" value="NM_001377273.1"/>
</dbReference>
<dbReference type="RefSeq" id="NP_005682.2">
    <molecule id="O60706-1"/>
    <property type="nucleotide sequence ID" value="NM_005691.4"/>
</dbReference>
<dbReference type="RefSeq" id="NP_064693.2">
    <molecule id="O60706-2"/>
    <property type="nucleotide sequence ID" value="NM_020297.4"/>
</dbReference>
<dbReference type="RefSeq" id="XP_005253341.1">
    <property type="nucleotide sequence ID" value="XM_005253284.3"/>
</dbReference>
<dbReference type="RefSeq" id="XP_005253343.1">
    <property type="nucleotide sequence ID" value="XM_005253286.3"/>
</dbReference>
<dbReference type="RefSeq" id="XP_005253344.1">
    <property type="nucleotide sequence ID" value="XM_005253287.4"/>
</dbReference>
<dbReference type="RefSeq" id="XP_005253345.1">
    <molecule id="O60706-2"/>
    <property type="nucleotide sequence ID" value="XM_005253288.5"/>
</dbReference>
<dbReference type="RefSeq" id="XP_011518847.1">
    <molecule id="O60706-2"/>
    <property type="nucleotide sequence ID" value="XM_011520545.4"/>
</dbReference>
<dbReference type="RefSeq" id="XP_054226692.1">
    <molecule id="O60706-2"/>
    <property type="nucleotide sequence ID" value="XM_054370717.1"/>
</dbReference>
<dbReference type="RefSeq" id="XP_054226693.1">
    <molecule id="O60706-2"/>
    <property type="nucleotide sequence ID" value="XM_054370718.1"/>
</dbReference>
<dbReference type="SMR" id="O60706"/>
<dbReference type="BioGRID" id="115371">
    <property type="interactions" value="6"/>
</dbReference>
<dbReference type="ComplexPortal" id="CPX-197">
    <molecule id="O60706-1"/>
    <property type="entry name" value="Inward rectifying potassium channel complex, Kir6.2-SUR2A"/>
</dbReference>
<dbReference type="ComplexPortal" id="CPX-199">
    <molecule id="O60706-2"/>
    <property type="entry name" value="Inward rectifying potassium channel complex, Kir6.2-SUR2B"/>
</dbReference>
<dbReference type="CORUM" id="O60706"/>
<dbReference type="FunCoup" id="O60706">
    <property type="interactions" value="88"/>
</dbReference>
<dbReference type="IntAct" id="O60706">
    <property type="interactions" value="4"/>
</dbReference>
<dbReference type="STRING" id="9606.ENSP00000261200"/>
<dbReference type="BindingDB" id="O60706"/>
<dbReference type="ChEMBL" id="CHEMBL1971"/>
<dbReference type="DrugBank" id="DB00171">
    <property type="generic name" value="ATP"/>
</dbReference>
<dbReference type="DrugBank" id="DB00222">
    <property type="generic name" value="Glimepiride"/>
</dbReference>
<dbReference type="DrugBank" id="DB01016">
    <property type="generic name" value="Glyburide"/>
</dbReference>
<dbReference type="DrugBank" id="DB09220">
    <property type="generic name" value="Nicorandil"/>
</dbReference>
<dbReference type="DrugBank" id="DB00912">
    <property type="generic name" value="Repaglinide"/>
</dbReference>
<dbReference type="DrugBank" id="DB01124">
    <property type="generic name" value="Tolbutamide"/>
</dbReference>
<dbReference type="DrugCentral" id="O60706"/>
<dbReference type="GuidetoPHARMACOLOGY" id="2746"/>
<dbReference type="TCDB" id="3.A.1.208.23">
    <property type="family name" value="the atp-binding cassette (abc) superfamily"/>
</dbReference>
<dbReference type="CarbonylDB" id="O60706"/>
<dbReference type="GlyCosmos" id="O60706">
    <property type="glycosylation" value="6 sites, 1 glycan"/>
</dbReference>
<dbReference type="GlyGen" id="O60706">
    <property type="glycosylation" value="6 sites, 1 O-linked glycan (1 site)"/>
</dbReference>
<dbReference type="iPTMnet" id="O60706"/>
<dbReference type="PhosphoSitePlus" id="O60706"/>
<dbReference type="BioMuta" id="ABCC9"/>
<dbReference type="jPOST" id="O60706"/>
<dbReference type="MassIVE" id="O60706"/>
<dbReference type="PaxDb" id="9606-ENSP00000261200"/>
<dbReference type="PeptideAtlas" id="O60706"/>
<dbReference type="ProteomicsDB" id="49533">
    <molecule id="O60706-1"/>
</dbReference>
<dbReference type="ProteomicsDB" id="49534">
    <molecule id="O60706-2"/>
</dbReference>
<dbReference type="ABCD" id="O60706">
    <property type="antibodies" value="3 sequenced antibodies"/>
</dbReference>
<dbReference type="Antibodypedia" id="12381">
    <property type="antibodies" value="214 antibodies from 31 providers"/>
</dbReference>
<dbReference type="DNASU" id="10060"/>
<dbReference type="Ensembl" id="ENST00000261200.9">
    <molecule id="O60706-2"/>
    <property type="protein sequence ID" value="ENSP00000261200.4"/>
    <property type="gene ID" value="ENSG00000069431.14"/>
</dbReference>
<dbReference type="Ensembl" id="ENST00000261201.10">
    <molecule id="O60706-1"/>
    <property type="protein sequence ID" value="ENSP00000261201.4"/>
    <property type="gene ID" value="ENSG00000069431.14"/>
</dbReference>
<dbReference type="GeneID" id="10060"/>
<dbReference type="KEGG" id="hsa:10060"/>
<dbReference type="MANE-Select" id="ENST00000261200.9">
    <molecule id="O60706-2"/>
    <property type="protein sequence ID" value="ENSP00000261200.4"/>
    <property type="RefSeq nucleotide sequence ID" value="NM_020297.4"/>
    <property type="RefSeq protein sequence ID" value="NP_064693.2"/>
</dbReference>
<dbReference type="UCSC" id="uc001rfh.4">
    <molecule id="O60706-1"/>
    <property type="organism name" value="human"/>
</dbReference>
<dbReference type="AGR" id="HGNC:60"/>
<dbReference type="CTD" id="10060"/>
<dbReference type="DisGeNET" id="10060"/>
<dbReference type="GeneCards" id="ABCC9"/>
<dbReference type="GeneReviews" id="ABCC9"/>
<dbReference type="HGNC" id="HGNC:60">
    <property type="gene designation" value="ABCC9"/>
</dbReference>
<dbReference type="HPA" id="ENSG00000069431">
    <property type="expression patterns" value="Tissue enhanced (skeletal)"/>
</dbReference>
<dbReference type="MalaCards" id="ABCC9"/>
<dbReference type="MIM" id="239850">
    <property type="type" value="phenotype"/>
</dbReference>
<dbReference type="MIM" id="601439">
    <property type="type" value="gene"/>
</dbReference>
<dbReference type="MIM" id="608569">
    <property type="type" value="phenotype"/>
</dbReference>
<dbReference type="MIM" id="614050">
    <property type="type" value="phenotype"/>
</dbReference>
<dbReference type="MIM" id="619719">
    <property type="type" value="phenotype"/>
</dbReference>
<dbReference type="neXtProt" id="NX_O60706"/>
<dbReference type="OpenTargets" id="ENSG00000069431"/>
<dbReference type="Orphanet" id="130">
    <property type="disease" value="Brugada syndrome"/>
</dbReference>
<dbReference type="Orphanet" id="1517">
    <property type="disease" value="Cantu syndrome"/>
</dbReference>
<dbReference type="Orphanet" id="334">
    <property type="disease" value="Familial atrial fibrillation"/>
</dbReference>
<dbReference type="Orphanet" id="154">
    <property type="disease" value="Familial isolated dilated cardiomyopathy"/>
</dbReference>
<dbReference type="PharmGKB" id="PA396"/>
<dbReference type="VEuPathDB" id="HostDB:ENSG00000069431"/>
<dbReference type="eggNOG" id="KOG0054">
    <property type="taxonomic scope" value="Eukaryota"/>
</dbReference>
<dbReference type="GeneTree" id="ENSGT00940000156680"/>
<dbReference type="HOGENOM" id="CLU_000604_27_6_1"/>
<dbReference type="InParanoid" id="O60706"/>
<dbReference type="OMA" id="LLYALTX"/>
<dbReference type="OrthoDB" id="6500128at2759"/>
<dbReference type="PAN-GO" id="O60706">
    <property type="GO annotations" value="3 GO annotations based on evolutionary models"/>
</dbReference>
<dbReference type="PhylomeDB" id="O60706"/>
<dbReference type="TreeFam" id="TF105201"/>
<dbReference type="PathwayCommons" id="O60706"/>
<dbReference type="Reactome" id="R-HSA-1296025">
    <property type="pathway name" value="ATP sensitive Potassium channels"/>
</dbReference>
<dbReference type="Reactome" id="R-HSA-382556">
    <property type="pathway name" value="ABC-family proteins mediated transport"/>
</dbReference>
<dbReference type="Reactome" id="R-HSA-5578775">
    <property type="pathway name" value="Ion homeostasis"/>
</dbReference>
<dbReference type="Reactome" id="R-HSA-5678420">
    <property type="pathway name" value="Defective ABCC9 causes CMD10, ATFB12 and Cantu syndrome"/>
</dbReference>
<dbReference type="SignaLink" id="O60706"/>
<dbReference type="SIGNOR" id="O60706"/>
<dbReference type="BioGRID-ORCS" id="10060">
    <property type="hits" value="10 hits in 1157 CRISPR screens"/>
</dbReference>
<dbReference type="ChiTaRS" id="ABCC9">
    <property type="organism name" value="human"/>
</dbReference>
<dbReference type="GeneWiki" id="ABCC9"/>
<dbReference type="GenomeRNAi" id="10060"/>
<dbReference type="Pharos" id="O60706">
    <property type="development level" value="Tclin"/>
</dbReference>
<dbReference type="PRO" id="PR:O60706"/>
<dbReference type="Proteomes" id="UP000005640">
    <property type="component" value="Chromosome 12"/>
</dbReference>
<dbReference type="RNAct" id="O60706">
    <property type="molecule type" value="protein"/>
</dbReference>
<dbReference type="Bgee" id="ENSG00000069431">
    <property type="expression patterns" value="Expressed in gastrocnemius and 128 other cell types or tissues"/>
</dbReference>
<dbReference type="ExpressionAtlas" id="O60706">
    <property type="expression patterns" value="baseline and differential"/>
</dbReference>
<dbReference type="GO" id="GO:0008282">
    <property type="term" value="C:inward rectifying potassium channel"/>
    <property type="evidence" value="ECO:0000314"/>
    <property type="project" value="BHF-UCL"/>
</dbReference>
<dbReference type="GO" id="GO:0016020">
    <property type="term" value="C:membrane"/>
    <property type="evidence" value="ECO:0000318"/>
    <property type="project" value="GO_Central"/>
</dbReference>
<dbReference type="GO" id="GO:0005739">
    <property type="term" value="C:mitochondrion"/>
    <property type="evidence" value="ECO:0007669"/>
    <property type="project" value="Ensembl"/>
</dbReference>
<dbReference type="GO" id="GO:0005886">
    <property type="term" value="C:plasma membrane"/>
    <property type="evidence" value="ECO:0000304"/>
    <property type="project" value="Reactome"/>
</dbReference>
<dbReference type="GO" id="GO:0031004">
    <property type="term" value="C:potassium ion-transporting ATPase complex"/>
    <property type="evidence" value="ECO:0000250"/>
    <property type="project" value="ARUK-UCL"/>
</dbReference>
<dbReference type="GO" id="GO:0042383">
    <property type="term" value="C:sarcolemma"/>
    <property type="evidence" value="ECO:0007669"/>
    <property type="project" value="Ensembl"/>
</dbReference>
<dbReference type="GO" id="GO:0030017">
    <property type="term" value="C:sarcomere"/>
    <property type="evidence" value="ECO:0007669"/>
    <property type="project" value="Ensembl"/>
</dbReference>
<dbReference type="GO" id="GO:0140359">
    <property type="term" value="F:ABC-type transporter activity"/>
    <property type="evidence" value="ECO:0007669"/>
    <property type="project" value="InterPro"/>
</dbReference>
<dbReference type="GO" id="GO:0005524">
    <property type="term" value="F:ATP binding"/>
    <property type="evidence" value="ECO:0007669"/>
    <property type="project" value="UniProtKB-KW"/>
</dbReference>
<dbReference type="GO" id="GO:0016887">
    <property type="term" value="F:ATP hydrolysis activity"/>
    <property type="evidence" value="ECO:0007669"/>
    <property type="project" value="InterPro"/>
</dbReference>
<dbReference type="GO" id="GO:0043225">
    <property type="term" value="F:ATPase-coupled inorganic anion transmembrane transporter activity"/>
    <property type="evidence" value="ECO:0000304"/>
    <property type="project" value="Reactome"/>
</dbReference>
<dbReference type="GO" id="GO:0019829">
    <property type="term" value="F:ATPase-coupled monoatomic cation transmembrane transporter activity"/>
    <property type="evidence" value="ECO:0000250"/>
    <property type="project" value="ARUK-UCL"/>
</dbReference>
<dbReference type="GO" id="GO:0042626">
    <property type="term" value="F:ATPase-coupled transmembrane transporter activity"/>
    <property type="evidence" value="ECO:0000314"/>
    <property type="project" value="ARUK-UCL"/>
</dbReference>
<dbReference type="GO" id="GO:0099104">
    <property type="term" value="F:potassium channel activator activity"/>
    <property type="evidence" value="ECO:0000250"/>
    <property type="project" value="ARUK-UCL"/>
</dbReference>
<dbReference type="GO" id="GO:0005267">
    <property type="term" value="F:potassium channel activity"/>
    <property type="evidence" value="ECO:0007669"/>
    <property type="project" value="Ensembl"/>
</dbReference>
<dbReference type="GO" id="GO:0015459">
    <property type="term" value="F:potassium channel regulator activity"/>
    <property type="evidence" value="ECO:0000250"/>
    <property type="project" value="BHF-UCL"/>
</dbReference>
<dbReference type="GO" id="GO:0044877">
    <property type="term" value="F:protein-containing complex binding"/>
    <property type="evidence" value="ECO:0007669"/>
    <property type="project" value="Ensembl"/>
</dbReference>
<dbReference type="GO" id="GO:0008281">
    <property type="term" value="F:sulfonylurea receptor activity"/>
    <property type="evidence" value="ECO:0000250"/>
    <property type="project" value="BHF-UCL"/>
</dbReference>
<dbReference type="GO" id="GO:0044325">
    <property type="term" value="F:transmembrane transporter binding"/>
    <property type="evidence" value="ECO:0000353"/>
    <property type="project" value="BHF-UCL"/>
</dbReference>
<dbReference type="GO" id="GO:0001508">
    <property type="term" value="P:action potential"/>
    <property type="evidence" value="ECO:0007669"/>
    <property type="project" value="Ensembl"/>
</dbReference>
<dbReference type="GO" id="GO:0046034">
    <property type="term" value="P:ATP metabolic process"/>
    <property type="evidence" value="ECO:0007669"/>
    <property type="project" value="Ensembl"/>
</dbReference>
<dbReference type="GO" id="GO:0061337">
    <property type="term" value="P:cardiac conduction"/>
    <property type="evidence" value="ECO:0000315"/>
    <property type="project" value="ARUK-UCL"/>
</dbReference>
<dbReference type="GO" id="GO:0086003">
    <property type="term" value="P:cardiac muscle cell contraction"/>
    <property type="evidence" value="ECO:0007669"/>
    <property type="project" value="Ensembl"/>
</dbReference>
<dbReference type="GO" id="GO:0045333">
    <property type="term" value="P:cellular respiration"/>
    <property type="evidence" value="ECO:0007669"/>
    <property type="project" value="Ensembl"/>
</dbReference>
<dbReference type="GO" id="GO:0071318">
    <property type="term" value="P:cellular response to ATP"/>
    <property type="evidence" value="ECO:0007669"/>
    <property type="project" value="Ensembl"/>
</dbReference>
<dbReference type="GO" id="GO:0071277">
    <property type="term" value="P:cellular response to calcium ion"/>
    <property type="evidence" value="ECO:0007669"/>
    <property type="project" value="Ensembl"/>
</dbReference>
<dbReference type="GO" id="GO:0062197">
    <property type="term" value="P:cellular response to chemical stress"/>
    <property type="evidence" value="ECO:0007669"/>
    <property type="project" value="Ensembl"/>
</dbReference>
<dbReference type="GO" id="GO:0035865">
    <property type="term" value="P:cellular response to potassium ion"/>
    <property type="evidence" value="ECO:0007669"/>
    <property type="project" value="Ensembl"/>
</dbReference>
<dbReference type="GO" id="GO:0071466">
    <property type="term" value="P:cellular response to xenobiotic stimulus"/>
    <property type="evidence" value="ECO:0007669"/>
    <property type="project" value="Ensembl"/>
</dbReference>
<dbReference type="GO" id="GO:0060976">
    <property type="term" value="P:coronary vasculature development"/>
    <property type="evidence" value="ECO:0007669"/>
    <property type="project" value="Ensembl"/>
</dbReference>
<dbReference type="GO" id="GO:0051607">
    <property type="term" value="P:defense response to virus"/>
    <property type="evidence" value="ECO:0000315"/>
    <property type="project" value="MGI"/>
</dbReference>
<dbReference type="GO" id="GO:0019395">
    <property type="term" value="P:fatty acid oxidation"/>
    <property type="evidence" value="ECO:0007669"/>
    <property type="project" value="Ensembl"/>
</dbReference>
<dbReference type="GO" id="GO:0048144">
    <property type="term" value="P:fibroblast proliferation"/>
    <property type="evidence" value="ECO:0007669"/>
    <property type="project" value="Ensembl"/>
</dbReference>
<dbReference type="GO" id="GO:0010467">
    <property type="term" value="P:gene expression"/>
    <property type="evidence" value="ECO:0007669"/>
    <property type="project" value="Ensembl"/>
</dbReference>
<dbReference type="GO" id="GO:0003007">
    <property type="term" value="P:heart morphogenesis"/>
    <property type="evidence" value="ECO:0007669"/>
    <property type="project" value="Ensembl"/>
</dbReference>
<dbReference type="GO" id="GO:0098662">
    <property type="term" value="P:inorganic cation transmembrane transport"/>
    <property type="evidence" value="ECO:0000250"/>
    <property type="project" value="ARUK-UCL"/>
</dbReference>
<dbReference type="GO" id="GO:0000165">
    <property type="term" value="P:MAPK cascade"/>
    <property type="evidence" value="ECO:0007669"/>
    <property type="project" value="Ensembl"/>
</dbReference>
<dbReference type="GO" id="GO:0007005">
    <property type="term" value="P:mitochondrion organization"/>
    <property type="evidence" value="ECO:0007669"/>
    <property type="project" value="Ensembl"/>
</dbReference>
<dbReference type="GO" id="GO:0098655">
    <property type="term" value="P:monoatomic cation transmembrane transport"/>
    <property type="evidence" value="ECO:0000250"/>
    <property type="project" value="ARUK-UCL"/>
</dbReference>
<dbReference type="GO" id="GO:0043066">
    <property type="term" value="P:negative regulation of apoptotic process"/>
    <property type="evidence" value="ECO:0007669"/>
    <property type="project" value="Ensembl"/>
</dbReference>
<dbReference type="GO" id="GO:0045776">
    <property type="term" value="P:negative regulation of blood pressure"/>
    <property type="evidence" value="ECO:0007669"/>
    <property type="project" value="Ensembl"/>
</dbReference>
<dbReference type="GO" id="GO:0072592">
    <property type="term" value="P:oxygen metabolic process"/>
    <property type="evidence" value="ECO:0007669"/>
    <property type="project" value="Ensembl"/>
</dbReference>
<dbReference type="GO" id="GO:1990573">
    <property type="term" value="P:potassium ion import across plasma membrane"/>
    <property type="evidence" value="ECO:0000250"/>
    <property type="project" value="BHF-UCL"/>
</dbReference>
<dbReference type="GO" id="GO:0071805">
    <property type="term" value="P:potassium ion transmembrane transport"/>
    <property type="evidence" value="ECO:0000315"/>
    <property type="project" value="ARUK-UCL"/>
</dbReference>
<dbReference type="GO" id="GO:1903409">
    <property type="term" value="P:reactive oxygen species biosynthetic process"/>
    <property type="evidence" value="ECO:0007669"/>
    <property type="project" value="Ensembl"/>
</dbReference>
<dbReference type="GO" id="GO:1901379">
    <property type="term" value="P:regulation of potassium ion transmembrane transport"/>
    <property type="evidence" value="ECO:0007669"/>
    <property type="project" value="Ensembl"/>
</dbReference>
<dbReference type="GO" id="GO:0006357">
    <property type="term" value="P:regulation of transcription by RNA polymerase II"/>
    <property type="evidence" value="ECO:0007669"/>
    <property type="project" value="Ensembl"/>
</dbReference>
<dbReference type="GO" id="GO:0014823">
    <property type="term" value="P:response to activity"/>
    <property type="evidence" value="ECO:0007669"/>
    <property type="project" value="Ensembl"/>
</dbReference>
<dbReference type="GO" id="GO:0033198">
    <property type="term" value="P:response to ATP"/>
    <property type="evidence" value="ECO:0000315"/>
    <property type="project" value="ARUK-UCL"/>
</dbReference>
<dbReference type="GO" id="GO:0043627">
    <property type="term" value="P:response to estrogen"/>
    <property type="evidence" value="ECO:0007669"/>
    <property type="project" value="Ensembl"/>
</dbReference>
<dbReference type="GO" id="GO:0042542">
    <property type="term" value="P:response to hydrogen peroxide"/>
    <property type="evidence" value="ECO:0007669"/>
    <property type="project" value="Ensembl"/>
</dbReference>
<dbReference type="GO" id="GO:1904880">
    <property type="term" value="P:response to hydrogen sulfide"/>
    <property type="evidence" value="ECO:0007669"/>
    <property type="project" value="Ensembl"/>
</dbReference>
<dbReference type="GO" id="GO:0001666">
    <property type="term" value="P:response to hypoxia"/>
    <property type="evidence" value="ECO:0007669"/>
    <property type="project" value="Ensembl"/>
</dbReference>
<dbReference type="GO" id="GO:1901652">
    <property type="term" value="P:response to peptide"/>
    <property type="evidence" value="ECO:0007669"/>
    <property type="project" value="Ensembl"/>
</dbReference>
<dbReference type="GO" id="GO:0007519">
    <property type="term" value="P:skeletal muscle tissue development"/>
    <property type="evidence" value="ECO:0007669"/>
    <property type="project" value="Ensembl"/>
</dbReference>
<dbReference type="GO" id="GO:0055085">
    <property type="term" value="P:transmembrane transport"/>
    <property type="evidence" value="ECO:0000318"/>
    <property type="project" value="GO_Central"/>
</dbReference>
<dbReference type="GO" id="GO:0150104">
    <property type="term" value="P:transport across blood-brain barrier"/>
    <property type="evidence" value="ECO:0000303"/>
    <property type="project" value="ARUK-UCL"/>
</dbReference>
<dbReference type="GO" id="GO:0042311">
    <property type="term" value="P:vasodilation"/>
    <property type="evidence" value="ECO:0007669"/>
    <property type="project" value="Ensembl"/>
</dbReference>
<dbReference type="CDD" id="cd18591">
    <property type="entry name" value="ABC_6TM_SUR1_D1_like"/>
    <property type="match status" value="1"/>
</dbReference>
<dbReference type="CDD" id="cd18602">
    <property type="entry name" value="ABC_6TM_SUR1_D2_like"/>
    <property type="match status" value="1"/>
</dbReference>
<dbReference type="CDD" id="cd03290">
    <property type="entry name" value="ABCC_SUR1_N"/>
    <property type="match status" value="1"/>
</dbReference>
<dbReference type="CDD" id="cd03288">
    <property type="entry name" value="ABCC_SUR2"/>
    <property type="match status" value="1"/>
</dbReference>
<dbReference type="DisProt" id="DP02381">
    <molecule id="O60706-2"/>
</dbReference>
<dbReference type="FunFam" id="1.20.1560.10:FF:000005">
    <property type="entry name" value="ATP-binding cassette, sub-family C (CFTR/MRP), member 9"/>
    <property type="match status" value="1"/>
</dbReference>
<dbReference type="FunFam" id="1.20.1560.10:FF:000006">
    <property type="entry name" value="ATP-binding cassette, sub-family C (CFTR/MRP), member 9"/>
    <property type="match status" value="1"/>
</dbReference>
<dbReference type="FunFam" id="3.40.50.300:FF:000197">
    <property type="entry name" value="ATP-binding cassette, sub-family C (CFTR/MRP), member 9"/>
    <property type="match status" value="1"/>
</dbReference>
<dbReference type="FunFam" id="3.40.50.300:FF:000394">
    <property type="entry name" value="ATP-binding cassette, sub-family C (CFTR/MRP), member 9"/>
    <property type="match status" value="1"/>
</dbReference>
<dbReference type="Gene3D" id="1.20.1560.10">
    <property type="entry name" value="ABC transporter type 1, transmembrane domain"/>
    <property type="match status" value="2"/>
</dbReference>
<dbReference type="Gene3D" id="3.40.50.300">
    <property type="entry name" value="P-loop containing nucleotide triphosphate hydrolases"/>
    <property type="match status" value="2"/>
</dbReference>
<dbReference type="InterPro" id="IPR003593">
    <property type="entry name" value="AAA+_ATPase"/>
</dbReference>
<dbReference type="InterPro" id="IPR011527">
    <property type="entry name" value="ABC1_TM_dom"/>
</dbReference>
<dbReference type="InterPro" id="IPR036640">
    <property type="entry name" value="ABC1_TM_sf"/>
</dbReference>
<dbReference type="InterPro" id="IPR003439">
    <property type="entry name" value="ABC_transporter-like_ATP-bd"/>
</dbReference>
<dbReference type="InterPro" id="IPR017871">
    <property type="entry name" value="ABC_transporter-like_CS"/>
</dbReference>
<dbReference type="InterPro" id="IPR050173">
    <property type="entry name" value="ABC_transporter_C-like"/>
</dbReference>
<dbReference type="InterPro" id="IPR000388">
    <property type="entry name" value="ABCC8/9"/>
</dbReference>
<dbReference type="InterPro" id="IPR001475">
    <property type="entry name" value="ABCC9"/>
</dbReference>
<dbReference type="InterPro" id="IPR047080">
    <property type="entry name" value="ABCC9_ATP-bd_dom1"/>
</dbReference>
<dbReference type="InterPro" id="IPR027417">
    <property type="entry name" value="P-loop_NTPase"/>
</dbReference>
<dbReference type="PANTHER" id="PTHR24223">
    <property type="entry name" value="ATP-BINDING CASSETTE SUB-FAMILY C"/>
    <property type="match status" value="1"/>
</dbReference>
<dbReference type="PANTHER" id="PTHR24223:SF173">
    <property type="entry name" value="ATP-BINDING CASSETTE SUB-FAMILY C MEMBER 9"/>
    <property type="match status" value="1"/>
</dbReference>
<dbReference type="Pfam" id="PF00664">
    <property type="entry name" value="ABC_membrane"/>
    <property type="match status" value="2"/>
</dbReference>
<dbReference type="Pfam" id="PF00005">
    <property type="entry name" value="ABC_tran"/>
    <property type="match status" value="2"/>
</dbReference>
<dbReference type="PRINTS" id="PR01094">
    <property type="entry name" value="SULFNYLUR2"/>
</dbReference>
<dbReference type="PRINTS" id="PR01092">
    <property type="entry name" value="SULFNYLUREAR"/>
</dbReference>
<dbReference type="SMART" id="SM00382">
    <property type="entry name" value="AAA"/>
    <property type="match status" value="2"/>
</dbReference>
<dbReference type="SUPFAM" id="SSF90123">
    <property type="entry name" value="ABC transporter transmembrane region"/>
    <property type="match status" value="2"/>
</dbReference>
<dbReference type="SUPFAM" id="SSF52540">
    <property type="entry name" value="P-loop containing nucleoside triphosphate hydrolases"/>
    <property type="match status" value="2"/>
</dbReference>
<dbReference type="PROSITE" id="PS50929">
    <property type="entry name" value="ABC_TM1F"/>
    <property type="match status" value="2"/>
</dbReference>
<dbReference type="PROSITE" id="PS00211">
    <property type="entry name" value="ABC_TRANSPORTER_1"/>
    <property type="match status" value="2"/>
</dbReference>
<dbReference type="PROSITE" id="PS50893">
    <property type="entry name" value="ABC_TRANSPORTER_2"/>
    <property type="match status" value="2"/>
</dbReference>
<accession>O60706</accession>
<accession>O60707</accession>